<name>SRR_RAT</name>
<feature type="chain" id="PRO_0000286173" description="Serine racemase">
    <location>
        <begin position="1"/>
        <end position="333"/>
    </location>
</feature>
<feature type="active site" description="Proton acceptor" evidence="2">
    <location>
        <position position="56"/>
    </location>
</feature>
<feature type="active site" description="Proton acceptor" evidence="2">
    <location>
        <position position="84"/>
    </location>
</feature>
<feature type="binding site" evidence="3">
    <location>
        <position position="13"/>
    </location>
    <ligand>
        <name>Mg(2+)</name>
        <dbReference type="ChEBI" id="CHEBI:18420"/>
        <label>1</label>
    </ligand>
</feature>
<feature type="binding site" evidence="3">
    <location>
        <position position="31"/>
    </location>
    <ligand>
        <name>ATP</name>
        <dbReference type="ChEBI" id="CHEBI:30616"/>
    </ligand>
</feature>
<feature type="binding site" evidence="3">
    <location>
        <position position="32"/>
    </location>
    <ligand>
        <name>ATP</name>
        <dbReference type="ChEBI" id="CHEBI:30616"/>
    </ligand>
</feature>
<feature type="binding site" evidence="3">
    <location>
        <position position="33"/>
    </location>
    <ligand>
        <name>ATP</name>
        <dbReference type="ChEBI" id="CHEBI:30616"/>
    </ligand>
</feature>
<feature type="binding site" evidence="3">
    <location>
        <position position="51"/>
    </location>
    <ligand>
        <name>ATP</name>
        <dbReference type="ChEBI" id="CHEBI:30616"/>
    </ligand>
</feature>
<feature type="binding site" evidence="3">
    <location>
        <position position="52"/>
    </location>
    <ligand>
        <name>ATP</name>
        <dbReference type="ChEBI" id="CHEBI:30616"/>
    </ligand>
</feature>
<feature type="binding site" evidence="3">
    <location>
        <position position="69"/>
    </location>
    <ligand>
        <name>Ca(2+)</name>
        <dbReference type="ChEBI" id="CHEBI:29108"/>
        <label>1</label>
    </ligand>
</feature>
<feature type="binding site" evidence="3">
    <location>
        <position position="81"/>
    </location>
    <ligand>
        <name>Ca(2+)</name>
        <dbReference type="ChEBI" id="CHEBI:29108"/>
        <label>2</label>
    </ligand>
</feature>
<feature type="binding site" evidence="7 9 10">
    <location>
        <position position="86"/>
    </location>
    <ligand>
        <name>pyridoxal 5'-phosphate</name>
        <dbReference type="ChEBI" id="CHEBI:597326"/>
    </ligand>
</feature>
<feature type="binding site" evidence="3">
    <location>
        <position position="89"/>
    </location>
    <ligand>
        <name>ATP</name>
        <dbReference type="ChEBI" id="CHEBI:30616"/>
    </ligand>
</feature>
<feature type="binding site" evidence="3">
    <location>
        <position position="121"/>
    </location>
    <ligand>
        <name>ATP</name>
        <dbReference type="ChEBI" id="CHEBI:30616"/>
    </ligand>
</feature>
<feature type="binding site" evidence="7 10">
    <location>
        <position position="154"/>
    </location>
    <ligand>
        <name>pyridoxal 5'-phosphate</name>
        <dbReference type="ChEBI" id="CHEBI:597326"/>
    </ligand>
</feature>
<feature type="binding site" evidence="3">
    <location>
        <position position="178"/>
    </location>
    <ligand>
        <name>Mg(2+)</name>
        <dbReference type="ChEBI" id="CHEBI:18420"/>
        <label>2</label>
    </ligand>
</feature>
<feature type="binding site" evidence="7 9 10">
    <location>
        <position position="185"/>
    </location>
    <ligand>
        <name>pyridoxal 5'-phosphate</name>
        <dbReference type="ChEBI" id="CHEBI:597326"/>
    </ligand>
</feature>
<feature type="binding site" evidence="7 9 10">
    <location>
        <position position="186"/>
    </location>
    <ligand>
        <name>pyridoxal 5'-phosphate</name>
        <dbReference type="ChEBI" id="CHEBI:597326"/>
    </ligand>
</feature>
<feature type="binding site" evidence="7 9 10">
    <location>
        <position position="187"/>
    </location>
    <ligand>
        <name>pyridoxal 5'-phosphate</name>
        <dbReference type="ChEBI" id="CHEBI:597326"/>
    </ligand>
</feature>
<feature type="binding site" evidence="7 9 10">
    <location>
        <position position="188"/>
    </location>
    <ligand>
        <name>pyridoxal 5'-phosphate</name>
        <dbReference type="ChEBI" id="CHEBI:597326"/>
    </ligand>
</feature>
<feature type="binding site" evidence="7 9 10">
    <location>
        <position position="189"/>
    </location>
    <ligand>
        <name>pyridoxal 5'-phosphate</name>
        <dbReference type="ChEBI" id="CHEBI:597326"/>
    </ligand>
</feature>
<feature type="binding site" evidence="3">
    <location>
        <position position="210"/>
    </location>
    <ligand>
        <name>Ca(2+)</name>
        <dbReference type="ChEBI" id="CHEBI:29108"/>
        <label>3</label>
    </ligand>
</feature>
<feature type="binding site" evidence="3">
    <location>
        <position position="210"/>
    </location>
    <ligand>
        <name>Mg(2+)</name>
        <dbReference type="ChEBI" id="CHEBI:18420"/>
        <label>3</label>
    </ligand>
</feature>
<feature type="binding site" evidence="7 9 10">
    <location>
        <position position="210"/>
    </location>
    <ligand>
        <name>Mn(2+)</name>
        <dbReference type="ChEBI" id="CHEBI:29035"/>
    </ligand>
</feature>
<feature type="binding site" evidence="3">
    <location>
        <position position="214"/>
    </location>
    <ligand>
        <name>Ca(2+)</name>
        <dbReference type="ChEBI" id="CHEBI:29108"/>
        <label>3</label>
    </ligand>
</feature>
<feature type="binding site" evidence="3">
    <location>
        <position position="214"/>
    </location>
    <ligand>
        <name>Mg(2+)</name>
        <dbReference type="ChEBI" id="CHEBI:18420"/>
        <label>3</label>
    </ligand>
</feature>
<feature type="binding site" evidence="7 9 10">
    <location>
        <position position="214"/>
    </location>
    <ligand>
        <name>Mn(2+)</name>
        <dbReference type="ChEBI" id="CHEBI:29035"/>
    </ligand>
</feature>
<feature type="binding site" evidence="3">
    <location>
        <position position="216"/>
    </location>
    <ligand>
        <name>Ca(2+)</name>
        <dbReference type="ChEBI" id="CHEBI:29108"/>
        <label>3</label>
    </ligand>
</feature>
<feature type="binding site" evidence="3">
    <location>
        <position position="216"/>
    </location>
    <ligand>
        <name>Mg(2+)</name>
        <dbReference type="ChEBI" id="CHEBI:18420"/>
        <label>3</label>
    </ligand>
</feature>
<feature type="binding site" evidence="7 9 10">
    <location>
        <position position="216"/>
    </location>
    <ligand>
        <name>Mn(2+)</name>
        <dbReference type="ChEBI" id="CHEBI:29035"/>
    </ligand>
</feature>
<feature type="binding site" evidence="3">
    <location>
        <position position="247"/>
    </location>
    <ligand>
        <name>Ca(2+)</name>
        <dbReference type="ChEBI" id="CHEBI:29108"/>
        <label>4</label>
    </ligand>
</feature>
<feature type="binding site" evidence="3">
    <location>
        <position position="247"/>
    </location>
    <ligand>
        <name>Mg(2+)</name>
        <dbReference type="ChEBI" id="CHEBI:18420"/>
        <label>4</label>
    </ligand>
</feature>
<feature type="binding site" evidence="3">
    <location>
        <position position="279"/>
    </location>
    <ligand>
        <name>ATP</name>
        <dbReference type="ChEBI" id="CHEBI:30616"/>
    </ligand>
</feature>
<feature type="binding site" evidence="7 9 10">
    <location>
        <position position="313"/>
    </location>
    <ligand>
        <name>pyridoxal 5'-phosphate</name>
        <dbReference type="ChEBI" id="CHEBI:597326"/>
    </ligand>
</feature>
<feature type="binding site" evidence="3">
    <location>
        <position position="316"/>
    </location>
    <ligand>
        <name>ATP</name>
        <dbReference type="ChEBI" id="CHEBI:30616"/>
    </ligand>
</feature>
<feature type="modified residue" description="N6-(pyridoxal phosphate)lysine" evidence="7 9 10">
    <location>
        <position position="56"/>
    </location>
</feature>
<feature type="modified residue" description="Phosphothreonine" evidence="4">
    <location>
        <position position="71"/>
    </location>
</feature>
<feature type="modified residue" description="S-nitrosocysteine" evidence="4">
    <location>
        <position position="113"/>
    </location>
</feature>
<feature type="helix" evidence="11">
    <location>
        <begin position="9"/>
        <end position="19"/>
    </location>
</feature>
<feature type="turn" evidence="11">
    <location>
        <begin position="20"/>
        <end position="22"/>
    </location>
</feature>
<feature type="helix" evidence="11">
    <location>
        <begin position="32"/>
        <end position="38"/>
    </location>
</feature>
<feature type="strand" evidence="11">
    <location>
        <begin position="40"/>
        <end position="46"/>
    </location>
</feature>
<feature type="helix" evidence="11">
    <location>
        <begin position="47"/>
        <end position="49"/>
    </location>
</feature>
<feature type="helix" evidence="11">
    <location>
        <begin position="51"/>
        <end position="53"/>
    </location>
</feature>
<feature type="helix" evidence="11">
    <location>
        <begin position="57"/>
        <end position="66"/>
    </location>
</feature>
<feature type="strand" evidence="11">
    <location>
        <begin position="70"/>
        <end position="73"/>
    </location>
</feature>
<feature type="strand" evidence="11">
    <location>
        <begin position="79"/>
        <end position="82"/>
    </location>
</feature>
<feature type="helix" evidence="11">
    <location>
        <begin position="86"/>
        <end position="97"/>
    </location>
</feature>
<feature type="strand" evidence="11">
    <location>
        <begin position="102"/>
        <end position="107"/>
    </location>
</feature>
<feature type="helix" evidence="11">
    <location>
        <begin position="112"/>
        <end position="120"/>
    </location>
</feature>
<feature type="strand" evidence="11">
    <location>
        <begin position="124"/>
        <end position="128"/>
    </location>
</feature>
<feature type="helix" evidence="11">
    <location>
        <begin position="134"/>
        <end position="146"/>
    </location>
</feature>
<feature type="strand" evidence="11">
    <location>
        <begin position="153"/>
        <end position="155"/>
    </location>
</feature>
<feature type="helix" evidence="11">
    <location>
        <begin position="157"/>
        <end position="163"/>
    </location>
</feature>
<feature type="helix" evidence="11">
    <location>
        <begin position="165"/>
        <end position="173"/>
    </location>
</feature>
<feature type="strand" evidence="11">
    <location>
        <begin position="179"/>
        <end position="183"/>
    </location>
</feature>
<feature type="strand" evidence="11">
    <location>
        <begin position="185"/>
        <end position="187"/>
    </location>
</feature>
<feature type="helix" evidence="11">
    <location>
        <begin position="188"/>
        <end position="200"/>
    </location>
</feature>
<feature type="strand" evidence="11">
    <location>
        <begin position="204"/>
        <end position="211"/>
    </location>
</feature>
<feature type="helix" evidence="11">
    <location>
        <begin position="212"/>
        <end position="214"/>
    </location>
</feature>
<feature type="helix" evidence="11">
    <location>
        <begin position="216"/>
        <end position="223"/>
    </location>
</feature>
<feature type="helix" evidence="11">
    <location>
        <begin position="238"/>
        <end position="240"/>
    </location>
</feature>
<feature type="turn" evidence="11">
    <location>
        <begin position="246"/>
        <end position="248"/>
    </location>
</feature>
<feature type="helix" evidence="11">
    <location>
        <begin position="249"/>
        <end position="255"/>
    </location>
</feature>
<feature type="strand" evidence="11">
    <location>
        <begin position="258"/>
        <end position="262"/>
    </location>
</feature>
<feature type="helix" evidence="11">
    <location>
        <begin position="264"/>
        <end position="278"/>
    </location>
</feature>
<feature type="helix" evidence="11">
    <location>
        <begin position="284"/>
        <end position="294"/>
    </location>
</feature>
<feature type="helix" evidence="11">
    <location>
        <begin position="296"/>
        <end position="300"/>
    </location>
</feature>
<feature type="strand" evidence="11">
    <location>
        <begin position="307"/>
        <end position="312"/>
    </location>
</feature>
<gene>
    <name type="primary">Srr</name>
</gene>
<reference key="1">
    <citation type="journal article" date="2003" name="Neurosci. Lett.">
        <title>Rat cerebral serine racemase: amino acid deletion and truncation at carboxy terminus.</title>
        <authorList>
            <person name="Konno R."/>
        </authorList>
    </citation>
    <scope>NUCLEOTIDE SEQUENCE [MRNA]</scope>
    <source>
        <strain>Sprague-Dawley</strain>
    </source>
</reference>
<reference key="2">
    <citation type="journal article" date="2004" name="Genome Res.">
        <title>The status, quality, and expansion of the NIH full-length cDNA project: the Mammalian Gene Collection (MGC).</title>
        <authorList>
            <consortium name="The MGC Project Team"/>
        </authorList>
    </citation>
    <scope>NUCLEOTIDE SEQUENCE [LARGE SCALE MRNA]</scope>
    <source>
        <tissue>Testis</tissue>
    </source>
</reference>
<reference key="3">
    <citation type="journal article" date="2006" name="Cell">
        <title>Glia-derived D-serine controls NMDA receptor activity and synaptic memory.</title>
        <authorList>
            <person name="Panatier A."/>
            <person name="Theodosis D.T."/>
            <person name="Mothet J.P."/>
            <person name="Touquet B."/>
            <person name="Pollegioni L."/>
            <person name="Poulain D.A."/>
            <person name="Oliet S.H."/>
        </authorList>
    </citation>
    <scope>FUNCTION</scope>
</reference>
<reference key="4">
    <citation type="journal article" date="2007" name="Eur. J. Neurosci.">
        <title>d-Amino acid oxidase and serine racemase in human brain: normal distribution and altered expression in schizophrenia.</title>
        <authorList>
            <person name="Verrall L."/>
            <person name="Walker M."/>
            <person name="Rawlings N."/>
            <person name="Benzel I."/>
            <person name="Kew J.N."/>
            <person name="Harrison P.J."/>
            <person name="Burnet P.W."/>
        </authorList>
    </citation>
    <scope>TISSUE SPECIFICITY</scope>
    <scope>INDUCTION</scope>
</reference>
<reference evidence="9 10" key="5">
    <citation type="journal article" date="2010" name="J. Biol. Chem.">
        <title>The structure of mammalian serine racemase: evidence for conformational changes upon inhibitor binding.</title>
        <authorList>
            <person name="Smith M.A."/>
            <person name="Mack V."/>
            <person name="Ebneth A."/>
            <person name="Moraes I."/>
            <person name="Felicetti B."/>
            <person name="Wood M."/>
            <person name="Schonfeld D."/>
            <person name="Mather O."/>
            <person name="Cesura A."/>
            <person name="Barker J."/>
        </authorList>
    </citation>
    <scope>X-RAY CRYSTALLOGRAPHY (2.1 ANGSTROMS) OF 3-333 IN COMPLEX WITH MANGANESE IONS; MALONATE AND PYRIDOXAL PHOSPHATE</scope>
    <scope>FUNCTION</scope>
    <scope>CATALYTIC ACTIVITY</scope>
    <scope>COFACTOR</scope>
    <scope>BIOPHYSICOCHEMICAL PROPERTIES</scope>
    <scope>ACTIVITY REGULATION</scope>
    <scope>SUBUNIT</scope>
    <scope>REACTION MECHANISM</scope>
    <scope>PYRIDOXAL PHOSPHATE AT LYS-56</scope>
</reference>
<accession>Q76EQ0</accession>
<sequence>MCAQYCISFADVEKAHLNIQDSVHLTPVLTSSILNQIAGRNLFFKCELFQKTGSFKIRGALNAIRGLIPDTLEGKPKAVVTHSSGNHGQALTYAAKLEGIPAYIVVPQTAPNCKKLAIQAYGASIVYSEPSDESRENVAQRIIQETEGILVHPNQEPAVIAGQGTIALEVLNQVPLVDALVVPVGGGGMVAGIAITIKTLKPSVKVYAAEPSNADDCYQSKLKGELTPNLHPPETIADGVKSSIGLNTWPIIRDLVDDVFTVTEDEIKYATQLVWERMKLLIEPTAGVGLAAVLSQHFQTVSPEVKNICIVLSGGNVDLTSLSWVKQAERPAP</sequence>
<protein>
    <recommendedName>
        <fullName>Serine racemase</fullName>
        <ecNumber evidence="7">5.1.1.18</ecNumber>
    </recommendedName>
    <alternativeName>
        <fullName>D-serine ammonia-lyase</fullName>
    </alternativeName>
    <alternativeName>
        <fullName>D-serine dehydratase</fullName>
        <ecNumber evidence="4">4.3.1.18</ecNumber>
    </alternativeName>
    <alternativeName>
        <fullName>L-serine ammonia-lyase</fullName>
    </alternativeName>
    <alternativeName>
        <fullName>L-serine dehydratase</fullName>
        <ecNumber evidence="4">4.3.1.17</ecNumber>
    </alternativeName>
</protein>
<evidence type="ECO:0000250" key="1"/>
<evidence type="ECO:0000250" key="2">
    <source>
        <dbReference type="UniProtKB" id="O59791"/>
    </source>
</evidence>
<evidence type="ECO:0000250" key="3">
    <source>
        <dbReference type="UniProtKB" id="Q9GZT4"/>
    </source>
</evidence>
<evidence type="ECO:0000250" key="4">
    <source>
        <dbReference type="UniProtKB" id="Q9QZX7"/>
    </source>
</evidence>
<evidence type="ECO:0000269" key="5">
    <source>
    </source>
</evidence>
<evidence type="ECO:0000269" key="6">
    <source>
    </source>
</evidence>
<evidence type="ECO:0000269" key="7">
    <source>
    </source>
</evidence>
<evidence type="ECO:0000305" key="8"/>
<evidence type="ECO:0007744" key="9">
    <source>
        <dbReference type="PDB" id="3HMK"/>
    </source>
</evidence>
<evidence type="ECO:0007744" key="10">
    <source>
        <dbReference type="PDB" id="3L6C"/>
    </source>
</evidence>
<evidence type="ECO:0007829" key="11">
    <source>
        <dbReference type="PDB" id="3HMK"/>
    </source>
</evidence>
<keyword id="KW-0002">3D-structure</keyword>
<keyword id="KW-0021">Allosteric enzyme</keyword>
<keyword id="KW-0067">ATP-binding</keyword>
<keyword id="KW-0106">Calcium</keyword>
<keyword id="KW-0413">Isomerase</keyword>
<keyword id="KW-0456">Lyase</keyword>
<keyword id="KW-0460">Magnesium</keyword>
<keyword id="KW-0479">Metal-binding</keyword>
<keyword id="KW-0547">Nucleotide-binding</keyword>
<keyword id="KW-0597">Phosphoprotein</keyword>
<keyword id="KW-0663">Pyridoxal phosphate</keyword>
<keyword id="KW-1185">Reference proteome</keyword>
<keyword id="KW-0702">S-nitrosylation</keyword>
<comment type="function">
    <text evidence="5 7">Catalyzes the synthesis of D-serine from L-serine. D-serine is a key coagonist with glutamate at NMDA receptors. Has dehydratase activity towards both L-serine and D-serine.</text>
</comment>
<comment type="catalytic activity">
    <reaction evidence="7">
        <text>L-serine = D-serine</text>
        <dbReference type="Rhea" id="RHEA:10980"/>
        <dbReference type="ChEBI" id="CHEBI:33384"/>
        <dbReference type="ChEBI" id="CHEBI:35247"/>
        <dbReference type="EC" id="5.1.1.18"/>
    </reaction>
</comment>
<comment type="catalytic activity">
    <reaction evidence="4">
        <text>D-serine = pyruvate + NH4(+)</text>
        <dbReference type="Rhea" id="RHEA:13977"/>
        <dbReference type="ChEBI" id="CHEBI:15361"/>
        <dbReference type="ChEBI" id="CHEBI:28938"/>
        <dbReference type="ChEBI" id="CHEBI:35247"/>
        <dbReference type="EC" id="4.3.1.18"/>
    </reaction>
</comment>
<comment type="catalytic activity">
    <reaction evidence="4">
        <text>L-serine = pyruvate + NH4(+)</text>
        <dbReference type="Rhea" id="RHEA:19169"/>
        <dbReference type="ChEBI" id="CHEBI:15361"/>
        <dbReference type="ChEBI" id="CHEBI:28938"/>
        <dbReference type="ChEBI" id="CHEBI:33384"/>
        <dbReference type="EC" id="4.3.1.17"/>
    </reaction>
</comment>
<comment type="cofactor">
    <cofactor evidence="3">
        <name>Mg(2+)</name>
        <dbReference type="ChEBI" id="CHEBI:18420"/>
    </cofactor>
    <cofactor evidence="3">
        <name>Mn(2+)</name>
        <dbReference type="ChEBI" id="CHEBI:29035"/>
    </cofactor>
    <cofactor evidence="3">
        <name>Ca(2+)</name>
        <dbReference type="ChEBI" id="CHEBI:29108"/>
    </cofactor>
</comment>
<comment type="cofactor">
    <cofactor evidence="7">
        <name>pyridoxal 5'-phosphate</name>
        <dbReference type="ChEBI" id="CHEBI:597326"/>
    </cofactor>
</comment>
<comment type="activity regulation">
    <text evidence="1 7">Allosterically activated by magnesium, and possibly also other divalent metal cations. Allosterically activated by ATP, ADP or GTP (By similarity). Competitively inhibited by malonate.</text>
</comment>
<comment type="biophysicochemical properties">
    <kinetics>
        <KM evidence="7">3.7 mM for L-serine</KM>
    </kinetics>
</comment>
<comment type="subunit">
    <text evidence="7">Homodimer.</text>
</comment>
<comment type="tissue specificity">
    <text evidence="6">Expressed in the cerebellum and frontal cortex (at protein level).</text>
</comment>
<comment type="induction">
    <text evidence="6">Not induced further in the cerebellum or frontal cortex following two weeks of intraperitoneal injections of the antipsychotic haloperidol.</text>
</comment>
<comment type="PTM">
    <text evidence="4">S-nitrosylated, leading to decrease the enzyme activity.</text>
</comment>
<comment type="similarity">
    <text evidence="8">Belongs to the serine/threonine dehydratase family.</text>
</comment>
<organism>
    <name type="scientific">Rattus norvegicus</name>
    <name type="common">Rat</name>
    <dbReference type="NCBI Taxonomy" id="10116"/>
    <lineage>
        <taxon>Eukaryota</taxon>
        <taxon>Metazoa</taxon>
        <taxon>Chordata</taxon>
        <taxon>Craniata</taxon>
        <taxon>Vertebrata</taxon>
        <taxon>Euteleostomi</taxon>
        <taxon>Mammalia</taxon>
        <taxon>Eutheria</taxon>
        <taxon>Euarchontoglires</taxon>
        <taxon>Glires</taxon>
        <taxon>Rodentia</taxon>
        <taxon>Myomorpha</taxon>
        <taxon>Muroidea</taxon>
        <taxon>Muridae</taxon>
        <taxon>Murinae</taxon>
        <taxon>Rattus</taxon>
    </lineage>
</organism>
<dbReference type="EC" id="5.1.1.18" evidence="7"/>
<dbReference type="EC" id="4.3.1.18" evidence="4"/>
<dbReference type="EC" id="4.3.1.17" evidence="4"/>
<dbReference type="EMBL" id="AB106282">
    <property type="protein sequence ID" value="BAC84968.1"/>
    <property type="molecule type" value="mRNA"/>
</dbReference>
<dbReference type="EMBL" id="BC082014">
    <property type="protein sequence ID" value="AAH82014.1"/>
    <property type="molecule type" value="mRNA"/>
</dbReference>
<dbReference type="RefSeq" id="NP_942052.1">
    <property type="nucleotide sequence ID" value="NM_198757.2"/>
</dbReference>
<dbReference type="RefSeq" id="XP_008766237.1">
    <property type="nucleotide sequence ID" value="XM_008768015.4"/>
</dbReference>
<dbReference type="RefSeq" id="XP_038941942.1">
    <property type="nucleotide sequence ID" value="XM_039086014.2"/>
</dbReference>
<dbReference type="RefSeq" id="XP_063125132.1">
    <property type="nucleotide sequence ID" value="XM_063269062.1"/>
</dbReference>
<dbReference type="RefSeq" id="XP_063125133.1">
    <property type="nucleotide sequence ID" value="XM_063269063.1"/>
</dbReference>
<dbReference type="RefSeq" id="XP_063125134.1">
    <property type="nucleotide sequence ID" value="XM_063269064.1"/>
</dbReference>
<dbReference type="RefSeq" id="XP_063125135.1">
    <property type="nucleotide sequence ID" value="XM_063269065.1"/>
</dbReference>
<dbReference type="RefSeq" id="XP_063125136.1">
    <property type="nucleotide sequence ID" value="XM_063269066.1"/>
</dbReference>
<dbReference type="RefSeq" id="XP_063125137.1">
    <property type="nucleotide sequence ID" value="XM_063269067.1"/>
</dbReference>
<dbReference type="PDB" id="3HMK">
    <property type="method" value="X-ray"/>
    <property type="resolution" value="2.10 A"/>
    <property type="chains" value="A/B=1-333"/>
</dbReference>
<dbReference type="PDB" id="3L6C">
    <property type="method" value="X-ray"/>
    <property type="resolution" value="2.20 A"/>
    <property type="chains" value="A/B=1-333"/>
</dbReference>
<dbReference type="PDBsum" id="3HMK"/>
<dbReference type="PDBsum" id="3L6C"/>
<dbReference type="SMR" id="Q76EQ0"/>
<dbReference type="BioGRID" id="257487">
    <property type="interactions" value="2"/>
</dbReference>
<dbReference type="FunCoup" id="Q76EQ0">
    <property type="interactions" value="423"/>
</dbReference>
<dbReference type="STRING" id="10116.ENSRNOP00000050774"/>
<dbReference type="GlyGen" id="Q76EQ0">
    <property type="glycosylation" value="1 site"/>
</dbReference>
<dbReference type="iPTMnet" id="Q76EQ0"/>
<dbReference type="PhosphoSitePlus" id="Q76EQ0"/>
<dbReference type="PaxDb" id="10116-ENSRNOP00000050774"/>
<dbReference type="Ensembl" id="ENSRNOT00000046110.5">
    <property type="protein sequence ID" value="ENSRNOP00000050774.2"/>
    <property type="gene ID" value="ENSRNOG00000002991.8"/>
</dbReference>
<dbReference type="GeneID" id="303306"/>
<dbReference type="KEGG" id="rno:303306"/>
<dbReference type="AGR" id="RGD:735094"/>
<dbReference type="CTD" id="63826"/>
<dbReference type="RGD" id="735094">
    <property type="gene designation" value="Srr"/>
</dbReference>
<dbReference type="eggNOG" id="KOG1251">
    <property type="taxonomic scope" value="Eukaryota"/>
</dbReference>
<dbReference type="GeneTree" id="ENSGT00550000075026"/>
<dbReference type="HOGENOM" id="CLU_021152_4_2_1"/>
<dbReference type="InParanoid" id="Q76EQ0"/>
<dbReference type="OMA" id="LIHPFDH"/>
<dbReference type="OrthoDB" id="4418812at2759"/>
<dbReference type="PhylomeDB" id="Q76EQ0"/>
<dbReference type="TreeFam" id="TF313346"/>
<dbReference type="BRENDA" id="5.1.1.18">
    <property type="organism ID" value="5301"/>
</dbReference>
<dbReference type="Reactome" id="R-RNO-977347">
    <property type="pathway name" value="Serine biosynthesis"/>
</dbReference>
<dbReference type="SABIO-RK" id="Q76EQ0"/>
<dbReference type="EvolutionaryTrace" id="Q76EQ0"/>
<dbReference type="PRO" id="PR:Q76EQ0"/>
<dbReference type="Proteomes" id="UP000002494">
    <property type="component" value="Chromosome 10"/>
</dbReference>
<dbReference type="Bgee" id="ENSRNOG00000002991">
    <property type="expression patterns" value="Expressed in liver and 19 other cell types or tissues"/>
</dbReference>
<dbReference type="ExpressionAtlas" id="Q76EQ0">
    <property type="expression patterns" value="baseline and differential"/>
</dbReference>
<dbReference type="GO" id="GO:0045177">
    <property type="term" value="C:apical part of cell"/>
    <property type="evidence" value="ECO:0000314"/>
    <property type="project" value="RGD"/>
</dbReference>
<dbReference type="GO" id="GO:0005737">
    <property type="term" value="C:cytoplasm"/>
    <property type="evidence" value="ECO:0000266"/>
    <property type="project" value="RGD"/>
</dbReference>
<dbReference type="GO" id="GO:0043025">
    <property type="term" value="C:neuronal cell body"/>
    <property type="evidence" value="ECO:0000266"/>
    <property type="project" value="RGD"/>
</dbReference>
<dbReference type="GO" id="GO:0005524">
    <property type="term" value="F:ATP binding"/>
    <property type="evidence" value="ECO:0000314"/>
    <property type="project" value="UniProtKB"/>
</dbReference>
<dbReference type="GO" id="GO:0005509">
    <property type="term" value="F:calcium ion binding"/>
    <property type="evidence" value="ECO:0000266"/>
    <property type="project" value="RGD"/>
</dbReference>
<dbReference type="GO" id="GO:0008721">
    <property type="term" value="F:D-serine ammonia-lyase activity"/>
    <property type="evidence" value="ECO:0007669"/>
    <property type="project" value="UniProtKB-EC"/>
</dbReference>
<dbReference type="GO" id="GO:0016594">
    <property type="term" value="F:glycine binding"/>
    <property type="evidence" value="ECO:0000266"/>
    <property type="project" value="RGD"/>
</dbReference>
<dbReference type="GO" id="GO:0042802">
    <property type="term" value="F:identical protein binding"/>
    <property type="evidence" value="ECO:0000266"/>
    <property type="project" value="RGD"/>
</dbReference>
<dbReference type="GO" id="GO:0003941">
    <property type="term" value="F:L-serine ammonia-lyase activity"/>
    <property type="evidence" value="ECO:0000266"/>
    <property type="project" value="RGD"/>
</dbReference>
<dbReference type="GO" id="GO:0000287">
    <property type="term" value="F:magnesium ion binding"/>
    <property type="evidence" value="ECO:0000314"/>
    <property type="project" value="UniProtKB"/>
</dbReference>
<dbReference type="GO" id="GO:0030165">
    <property type="term" value="F:PDZ domain binding"/>
    <property type="evidence" value="ECO:0000266"/>
    <property type="project" value="RGD"/>
</dbReference>
<dbReference type="GO" id="GO:0042803">
    <property type="term" value="F:protein homodimerization activity"/>
    <property type="evidence" value="ECO:0000353"/>
    <property type="project" value="UniProtKB"/>
</dbReference>
<dbReference type="GO" id="GO:0030170">
    <property type="term" value="F:pyridoxal phosphate binding"/>
    <property type="evidence" value="ECO:0000314"/>
    <property type="project" value="UniProtKB"/>
</dbReference>
<dbReference type="GO" id="GO:0030378">
    <property type="term" value="F:serine racemase activity"/>
    <property type="evidence" value="ECO:0000314"/>
    <property type="project" value="UniProtKB"/>
</dbReference>
<dbReference type="GO" id="GO:0018114">
    <property type="term" value="F:threonine racemase activity"/>
    <property type="evidence" value="ECO:0000266"/>
    <property type="project" value="RGD"/>
</dbReference>
<dbReference type="GO" id="GO:0070179">
    <property type="term" value="P:D-serine biosynthetic process"/>
    <property type="evidence" value="ECO:0000266"/>
    <property type="project" value="RGD"/>
</dbReference>
<dbReference type="GO" id="GO:0070178">
    <property type="term" value="P:D-serine metabolic process"/>
    <property type="evidence" value="ECO:0000314"/>
    <property type="project" value="UniProtKB"/>
</dbReference>
<dbReference type="GO" id="GO:0006563">
    <property type="term" value="P:L-serine metabolic process"/>
    <property type="evidence" value="ECO:0000314"/>
    <property type="project" value="UniProtKB"/>
</dbReference>
<dbReference type="GO" id="GO:0042866">
    <property type="term" value="P:pyruvate biosynthetic process"/>
    <property type="evidence" value="ECO:0000266"/>
    <property type="project" value="RGD"/>
</dbReference>
<dbReference type="GO" id="GO:1901986">
    <property type="term" value="P:response to ketamine"/>
    <property type="evidence" value="ECO:0000270"/>
    <property type="project" value="RGD"/>
</dbReference>
<dbReference type="GO" id="GO:0032496">
    <property type="term" value="P:response to lipopolysaccharide"/>
    <property type="evidence" value="ECO:0000266"/>
    <property type="project" value="RGD"/>
</dbReference>
<dbReference type="GO" id="GO:0009410">
    <property type="term" value="P:response to xenobiotic stimulus"/>
    <property type="evidence" value="ECO:0000270"/>
    <property type="project" value="RGD"/>
</dbReference>
<dbReference type="GO" id="GO:0009069">
    <property type="term" value="P:serine family amino acid metabolic process"/>
    <property type="evidence" value="ECO:0000266"/>
    <property type="project" value="RGD"/>
</dbReference>
<dbReference type="CDD" id="cd01562">
    <property type="entry name" value="Thr-dehyd"/>
    <property type="match status" value="1"/>
</dbReference>
<dbReference type="FunFam" id="3.40.50.1100:FF:000041">
    <property type="entry name" value="Threonine ammonia-lyase, variant"/>
    <property type="match status" value="1"/>
</dbReference>
<dbReference type="Gene3D" id="3.40.50.1100">
    <property type="match status" value="2"/>
</dbReference>
<dbReference type="InterPro" id="IPR000634">
    <property type="entry name" value="Ser/Thr_deHydtase_PyrdxlP-BS"/>
</dbReference>
<dbReference type="InterPro" id="IPR001926">
    <property type="entry name" value="TrpB-like_PALP"/>
</dbReference>
<dbReference type="InterPro" id="IPR036052">
    <property type="entry name" value="TrpB-like_PALP_sf"/>
</dbReference>
<dbReference type="PANTHER" id="PTHR43050">
    <property type="entry name" value="SERINE / THREONINE RACEMASE FAMILY MEMBER"/>
    <property type="match status" value="1"/>
</dbReference>
<dbReference type="PANTHER" id="PTHR43050:SF1">
    <property type="entry name" value="SERINE RACEMASE"/>
    <property type="match status" value="1"/>
</dbReference>
<dbReference type="Pfam" id="PF00291">
    <property type="entry name" value="PALP"/>
    <property type="match status" value="1"/>
</dbReference>
<dbReference type="SUPFAM" id="SSF53686">
    <property type="entry name" value="Tryptophan synthase beta subunit-like PLP-dependent enzymes"/>
    <property type="match status" value="1"/>
</dbReference>
<dbReference type="PROSITE" id="PS00165">
    <property type="entry name" value="DEHYDRATASE_SER_THR"/>
    <property type="match status" value="1"/>
</dbReference>
<proteinExistence type="evidence at protein level"/>